<name>RS16_PHYMT</name>
<sequence length="81" mass="9392">MSVKIRLQRFGKHKKPFYRVVAINSKNSRDGKFLEILGTYEPLLGNINLNTKNIEKWLFYGAVPTLTVKNLINKQNKNNKS</sequence>
<dbReference type="EMBL" id="CU469464">
    <property type="protein sequence ID" value="CAP18624.1"/>
    <property type="molecule type" value="Genomic_DNA"/>
</dbReference>
<dbReference type="SMR" id="B3R0P0"/>
<dbReference type="STRING" id="37692.ATP_00437"/>
<dbReference type="KEGG" id="pml:ATP_00437"/>
<dbReference type="eggNOG" id="COG0228">
    <property type="taxonomic scope" value="Bacteria"/>
</dbReference>
<dbReference type="HOGENOM" id="CLU_100590_5_2_14"/>
<dbReference type="Proteomes" id="UP000002020">
    <property type="component" value="Chromosome"/>
</dbReference>
<dbReference type="GO" id="GO:0005737">
    <property type="term" value="C:cytoplasm"/>
    <property type="evidence" value="ECO:0007669"/>
    <property type="project" value="UniProtKB-ARBA"/>
</dbReference>
<dbReference type="GO" id="GO:0015935">
    <property type="term" value="C:small ribosomal subunit"/>
    <property type="evidence" value="ECO:0007669"/>
    <property type="project" value="TreeGrafter"/>
</dbReference>
<dbReference type="GO" id="GO:0003735">
    <property type="term" value="F:structural constituent of ribosome"/>
    <property type="evidence" value="ECO:0007669"/>
    <property type="project" value="InterPro"/>
</dbReference>
<dbReference type="GO" id="GO:0006412">
    <property type="term" value="P:translation"/>
    <property type="evidence" value="ECO:0007669"/>
    <property type="project" value="UniProtKB-UniRule"/>
</dbReference>
<dbReference type="Gene3D" id="3.30.1320.10">
    <property type="match status" value="1"/>
</dbReference>
<dbReference type="HAMAP" id="MF_00385">
    <property type="entry name" value="Ribosomal_bS16"/>
    <property type="match status" value="1"/>
</dbReference>
<dbReference type="InterPro" id="IPR000307">
    <property type="entry name" value="Ribosomal_bS16"/>
</dbReference>
<dbReference type="InterPro" id="IPR023803">
    <property type="entry name" value="Ribosomal_bS16_dom_sf"/>
</dbReference>
<dbReference type="NCBIfam" id="TIGR00002">
    <property type="entry name" value="S16"/>
    <property type="match status" value="1"/>
</dbReference>
<dbReference type="PANTHER" id="PTHR12919">
    <property type="entry name" value="30S RIBOSOMAL PROTEIN S16"/>
    <property type="match status" value="1"/>
</dbReference>
<dbReference type="PANTHER" id="PTHR12919:SF20">
    <property type="entry name" value="SMALL RIBOSOMAL SUBUNIT PROTEIN BS16M"/>
    <property type="match status" value="1"/>
</dbReference>
<dbReference type="Pfam" id="PF00886">
    <property type="entry name" value="Ribosomal_S16"/>
    <property type="match status" value="1"/>
</dbReference>
<dbReference type="SUPFAM" id="SSF54565">
    <property type="entry name" value="Ribosomal protein S16"/>
    <property type="match status" value="1"/>
</dbReference>
<organism>
    <name type="scientific">Phytoplasma mali (strain AT)</name>
    <dbReference type="NCBI Taxonomy" id="482235"/>
    <lineage>
        <taxon>Bacteria</taxon>
        <taxon>Bacillati</taxon>
        <taxon>Mycoplasmatota</taxon>
        <taxon>Mollicutes</taxon>
        <taxon>Acholeplasmatales</taxon>
        <taxon>Acholeplasmataceae</taxon>
        <taxon>Candidatus Phytoplasma</taxon>
        <taxon>16SrX (Apple proliferation group)</taxon>
    </lineage>
</organism>
<reference key="1">
    <citation type="journal article" date="2008" name="BMC Genomics">
        <title>The linear chromosome of the plant-pathogenic mycoplasma 'Candidatus Phytoplasma mali'.</title>
        <authorList>
            <person name="Kube M."/>
            <person name="Schneider B."/>
            <person name="Kuhl H."/>
            <person name="Dandekar T."/>
            <person name="Heitmann K."/>
            <person name="Migdoll A.M."/>
            <person name="Reinhardt R."/>
            <person name="Seemueller E."/>
        </authorList>
    </citation>
    <scope>NUCLEOTIDE SEQUENCE [LARGE SCALE GENOMIC DNA]</scope>
    <source>
        <strain>AT</strain>
    </source>
</reference>
<accession>B3R0P0</accession>
<gene>
    <name evidence="1" type="primary">rpsP</name>
    <name type="ordered locus">ATP_00437</name>
</gene>
<protein>
    <recommendedName>
        <fullName evidence="1">Small ribosomal subunit protein bS16</fullName>
    </recommendedName>
    <alternativeName>
        <fullName evidence="2">30S ribosomal protein S16</fullName>
    </alternativeName>
</protein>
<proteinExistence type="inferred from homology"/>
<comment type="similarity">
    <text evidence="1">Belongs to the bacterial ribosomal protein bS16 family.</text>
</comment>
<evidence type="ECO:0000255" key="1">
    <source>
        <dbReference type="HAMAP-Rule" id="MF_00385"/>
    </source>
</evidence>
<evidence type="ECO:0000305" key="2"/>
<feature type="chain" id="PRO_1000134318" description="Small ribosomal subunit protein bS16">
    <location>
        <begin position="1"/>
        <end position="81"/>
    </location>
</feature>
<keyword id="KW-1185">Reference proteome</keyword>
<keyword id="KW-0687">Ribonucleoprotein</keyword>
<keyword id="KW-0689">Ribosomal protein</keyword>